<evidence type="ECO:0000255" key="1">
    <source>
        <dbReference type="HAMAP-Rule" id="MF_00743"/>
    </source>
</evidence>
<evidence type="ECO:0000256" key="2">
    <source>
        <dbReference type="SAM" id="MobiDB-lite"/>
    </source>
</evidence>
<comment type="function">
    <text evidence="1">Involved in the TCA cycle. Catalyzes the stereospecific interconversion of fumarate to L-malate.</text>
</comment>
<comment type="catalytic activity">
    <reaction evidence="1">
        <text>(S)-malate = fumarate + H2O</text>
        <dbReference type="Rhea" id="RHEA:12460"/>
        <dbReference type="ChEBI" id="CHEBI:15377"/>
        <dbReference type="ChEBI" id="CHEBI:15589"/>
        <dbReference type="ChEBI" id="CHEBI:29806"/>
        <dbReference type="EC" id="4.2.1.2"/>
    </reaction>
</comment>
<comment type="pathway">
    <text evidence="1">Carbohydrate metabolism; tricarboxylic acid cycle; (S)-malate from fumarate: step 1/1.</text>
</comment>
<comment type="subunit">
    <text evidence="1">Homotetramer.</text>
</comment>
<comment type="subcellular location">
    <subcellularLocation>
        <location evidence="1">Cytoplasm</location>
    </subcellularLocation>
</comment>
<comment type="miscellaneous">
    <text evidence="1">There are 2 substrate-binding sites: the catalytic A site, and the non-catalytic B site that may play a role in the transfer of substrate or product between the active site and the solvent. Alternatively, the B site may bind allosteric effectors.</text>
</comment>
<comment type="similarity">
    <text evidence="1">Belongs to the class-II fumarase/aspartase family. Fumarase subfamily.</text>
</comment>
<proteinExistence type="inferred from homology"/>
<dbReference type="EC" id="4.2.1.2" evidence="1"/>
<dbReference type="EMBL" id="AF497854">
    <property type="protein sequence ID" value="AAN03819.1"/>
    <property type="molecule type" value="Genomic_DNA"/>
</dbReference>
<dbReference type="EMBL" id="CP001510">
    <property type="protein sequence ID" value="ACS40610.1"/>
    <property type="molecule type" value="Genomic_DNA"/>
</dbReference>
<dbReference type="RefSeq" id="WP_003597776.1">
    <property type="nucleotide sequence ID" value="NC_012808.1"/>
</dbReference>
<dbReference type="SMR" id="Q8KTE1"/>
<dbReference type="STRING" id="272630.MexAM1_META1p2857"/>
<dbReference type="KEGG" id="mea:Mex_1p2857"/>
<dbReference type="eggNOG" id="COG0114">
    <property type="taxonomic scope" value="Bacteria"/>
</dbReference>
<dbReference type="HOGENOM" id="CLU_021594_4_1_5"/>
<dbReference type="OrthoDB" id="9802809at2"/>
<dbReference type="UniPathway" id="UPA00223">
    <property type="reaction ID" value="UER01007"/>
</dbReference>
<dbReference type="Proteomes" id="UP000009081">
    <property type="component" value="Chromosome"/>
</dbReference>
<dbReference type="GO" id="GO:0005737">
    <property type="term" value="C:cytoplasm"/>
    <property type="evidence" value="ECO:0007669"/>
    <property type="project" value="UniProtKB-SubCell"/>
</dbReference>
<dbReference type="GO" id="GO:0004333">
    <property type="term" value="F:fumarate hydratase activity"/>
    <property type="evidence" value="ECO:0007669"/>
    <property type="project" value="UniProtKB-UniRule"/>
</dbReference>
<dbReference type="GO" id="GO:0006106">
    <property type="term" value="P:fumarate metabolic process"/>
    <property type="evidence" value="ECO:0007669"/>
    <property type="project" value="InterPro"/>
</dbReference>
<dbReference type="GO" id="GO:0006108">
    <property type="term" value="P:malate metabolic process"/>
    <property type="evidence" value="ECO:0007669"/>
    <property type="project" value="TreeGrafter"/>
</dbReference>
<dbReference type="GO" id="GO:0006099">
    <property type="term" value="P:tricarboxylic acid cycle"/>
    <property type="evidence" value="ECO:0007669"/>
    <property type="project" value="UniProtKB-UniRule"/>
</dbReference>
<dbReference type="CDD" id="cd01362">
    <property type="entry name" value="Fumarase_classII"/>
    <property type="match status" value="1"/>
</dbReference>
<dbReference type="FunFam" id="1.10.40.30:FF:000002">
    <property type="entry name" value="Fumarate hydratase class II"/>
    <property type="match status" value="1"/>
</dbReference>
<dbReference type="FunFam" id="1.10.275.10:FF:000001">
    <property type="entry name" value="Fumarate hydratase, mitochondrial"/>
    <property type="match status" value="1"/>
</dbReference>
<dbReference type="FunFam" id="1.20.200.10:FF:000001">
    <property type="entry name" value="Fumarate hydratase, mitochondrial"/>
    <property type="match status" value="1"/>
</dbReference>
<dbReference type="Gene3D" id="1.10.40.30">
    <property type="entry name" value="Fumarase/aspartase (C-terminal domain)"/>
    <property type="match status" value="1"/>
</dbReference>
<dbReference type="Gene3D" id="1.20.200.10">
    <property type="entry name" value="Fumarase/aspartase (Central domain)"/>
    <property type="match status" value="1"/>
</dbReference>
<dbReference type="Gene3D" id="1.10.275.10">
    <property type="entry name" value="Fumarase/aspartase (N-terminal domain)"/>
    <property type="match status" value="1"/>
</dbReference>
<dbReference type="HAMAP" id="MF_00743">
    <property type="entry name" value="FumaraseC"/>
    <property type="match status" value="1"/>
</dbReference>
<dbReference type="InterPro" id="IPR005677">
    <property type="entry name" value="Fum_hydII"/>
</dbReference>
<dbReference type="InterPro" id="IPR024083">
    <property type="entry name" value="Fumarase/histidase_N"/>
</dbReference>
<dbReference type="InterPro" id="IPR018951">
    <property type="entry name" value="Fumarase_C_C"/>
</dbReference>
<dbReference type="InterPro" id="IPR020557">
    <property type="entry name" value="Fumarate_lyase_CS"/>
</dbReference>
<dbReference type="InterPro" id="IPR000362">
    <property type="entry name" value="Fumarate_lyase_fam"/>
</dbReference>
<dbReference type="InterPro" id="IPR022761">
    <property type="entry name" value="Fumarate_lyase_N"/>
</dbReference>
<dbReference type="InterPro" id="IPR008948">
    <property type="entry name" value="L-Aspartase-like"/>
</dbReference>
<dbReference type="NCBIfam" id="TIGR00979">
    <property type="entry name" value="fumC_II"/>
    <property type="match status" value="1"/>
</dbReference>
<dbReference type="NCBIfam" id="NF008909">
    <property type="entry name" value="PRK12273.1"/>
    <property type="match status" value="1"/>
</dbReference>
<dbReference type="PANTHER" id="PTHR11444">
    <property type="entry name" value="ASPARTATEAMMONIA/ARGININOSUCCINATE/ADENYLOSUCCINATE LYASE"/>
    <property type="match status" value="1"/>
</dbReference>
<dbReference type="PANTHER" id="PTHR11444:SF1">
    <property type="entry name" value="FUMARATE HYDRATASE, MITOCHONDRIAL"/>
    <property type="match status" value="1"/>
</dbReference>
<dbReference type="Pfam" id="PF10415">
    <property type="entry name" value="FumaraseC_C"/>
    <property type="match status" value="1"/>
</dbReference>
<dbReference type="Pfam" id="PF00206">
    <property type="entry name" value="Lyase_1"/>
    <property type="match status" value="1"/>
</dbReference>
<dbReference type="PRINTS" id="PR00145">
    <property type="entry name" value="ARGSUCLYASE"/>
</dbReference>
<dbReference type="PRINTS" id="PR00149">
    <property type="entry name" value="FUMRATELYASE"/>
</dbReference>
<dbReference type="SUPFAM" id="SSF48557">
    <property type="entry name" value="L-aspartase-like"/>
    <property type="match status" value="1"/>
</dbReference>
<dbReference type="PROSITE" id="PS00163">
    <property type="entry name" value="FUMARATE_LYASES"/>
    <property type="match status" value="1"/>
</dbReference>
<name>FUMC_METEA</name>
<keyword id="KW-0963">Cytoplasm</keyword>
<keyword id="KW-0456">Lyase</keyword>
<keyword id="KW-1185">Reference proteome</keyword>
<keyword id="KW-0816">Tricarboxylic acid cycle</keyword>
<sequence length="472" mass="49739">MSPHENPSVETRTESDTFGPIEVPAHRYWGAQTQRSIQNFKIGTERQPAPLVHALGIVKQAAALVNKDLGGLDPKIADAIAESAAEVVAGKHDDEFPLVVWQTGSGTQSNMNANEVIASLANERLGGKRGGKSPVHPNDHCNRGQSSNDTFPTAMHIAVAREVQERLLPALSHLHTALDAKAKEFESIVKIGRTHLQDATPVSLGQEFSGYAAQVALGGARIAATLPGVLALAQGGTAVGTGLNAHPEFAERFAAKVAELTGLPFTSAENKFEALATHDALVFLQGALTALASGLFKIANDIRLLGSGPRSGLGELSLPENEPGSSIMPGKVNPTQCEALTMVCAQVVGNGTTVSFAGSQGHFELNVFKPVIANAVLQSVRILADASVSFTDNCVVGIKANTDRISDLMSRSLMLVTALAPSIGYDKAAEIAKTAHKNGTTLKEEALRLGYVTDEEFERVVRPETMLAPSAE</sequence>
<gene>
    <name evidence="1" type="primary">fumC</name>
    <name type="synonym">fumA</name>
    <name type="ordered locus">MexAM1_META1p2857</name>
</gene>
<feature type="chain" id="PRO_0000161287" description="Fumarate hydratase class II">
    <location>
        <begin position="1"/>
        <end position="472"/>
    </location>
</feature>
<feature type="region of interest" description="Disordered" evidence="2">
    <location>
        <begin position="1"/>
        <end position="20"/>
    </location>
</feature>
<feature type="region of interest" description="Disordered" evidence="2">
    <location>
        <begin position="127"/>
        <end position="149"/>
    </location>
</feature>
<feature type="active site" description="Proton donor/acceptor" evidence="1">
    <location>
        <position position="195"/>
    </location>
</feature>
<feature type="active site" evidence="1">
    <location>
        <position position="325"/>
    </location>
</feature>
<feature type="binding site" evidence="1">
    <location>
        <begin position="105"/>
        <end position="107"/>
    </location>
    <ligand>
        <name>substrate</name>
    </ligand>
</feature>
<feature type="binding site" description="in site B" evidence="1">
    <location>
        <begin position="136"/>
        <end position="139"/>
    </location>
    <ligand>
        <name>substrate</name>
    </ligand>
</feature>
<feature type="binding site" evidence="1">
    <location>
        <begin position="146"/>
        <end position="148"/>
    </location>
    <ligand>
        <name>substrate</name>
    </ligand>
</feature>
<feature type="binding site" evidence="1">
    <location>
        <position position="194"/>
    </location>
    <ligand>
        <name>substrate</name>
    </ligand>
</feature>
<feature type="binding site" evidence="1">
    <location>
        <position position="326"/>
    </location>
    <ligand>
        <name>substrate</name>
    </ligand>
</feature>
<feature type="binding site" evidence="1">
    <location>
        <begin position="331"/>
        <end position="333"/>
    </location>
    <ligand>
        <name>substrate</name>
    </ligand>
</feature>
<feature type="site" description="Important for catalytic activity" evidence="1">
    <location>
        <position position="338"/>
    </location>
</feature>
<accession>Q8KTE1</accession>
<accession>C5AUK0</accession>
<protein>
    <recommendedName>
        <fullName evidence="1">Fumarate hydratase class II</fullName>
        <shortName evidence="1">Fumarase C</shortName>
        <ecNumber evidence="1">4.2.1.2</ecNumber>
    </recommendedName>
    <alternativeName>
        <fullName evidence="1">Aerobic fumarase</fullName>
    </alternativeName>
    <alternativeName>
        <fullName evidence="1">Iron-independent fumarase</fullName>
    </alternativeName>
</protein>
<organism>
    <name type="scientific">Methylorubrum extorquens (strain ATCC 14718 / DSM 1338 / JCM 2805 / NCIMB 9133 / AM1)</name>
    <name type="common">Methylobacterium extorquens</name>
    <dbReference type="NCBI Taxonomy" id="272630"/>
    <lineage>
        <taxon>Bacteria</taxon>
        <taxon>Pseudomonadati</taxon>
        <taxon>Pseudomonadota</taxon>
        <taxon>Alphaproteobacteria</taxon>
        <taxon>Hyphomicrobiales</taxon>
        <taxon>Methylobacteriaceae</taxon>
        <taxon>Methylorubrum</taxon>
    </lineage>
</organism>
<reference key="1">
    <citation type="submission" date="2002-04" db="EMBL/GenBank/DDBJ databases">
        <title>Reconstruction of C3 and C4 metabolism in Methylobacterium extorquens AM1 using transposon mutagenesis.</title>
        <authorList>
            <person name="Van Dien S.J."/>
            <person name="Okubo Y."/>
            <person name="Hough M.T."/>
            <person name="Taitano T."/>
            <person name="Lidstrom M.E."/>
        </authorList>
    </citation>
    <scope>NUCLEOTIDE SEQUENCE [GENOMIC DNA]</scope>
</reference>
<reference key="2">
    <citation type="journal article" date="2009" name="PLoS ONE">
        <title>Methylobacterium genome sequences: a reference blueprint to investigate microbial metabolism of C1 compounds from natural and industrial sources.</title>
        <authorList>
            <person name="Vuilleumier S."/>
            <person name="Chistoserdova L."/>
            <person name="Lee M.-C."/>
            <person name="Bringel F."/>
            <person name="Lajus A."/>
            <person name="Zhou Y."/>
            <person name="Gourion B."/>
            <person name="Barbe V."/>
            <person name="Chang J."/>
            <person name="Cruveiller S."/>
            <person name="Dossat C."/>
            <person name="Gillett W."/>
            <person name="Gruffaz C."/>
            <person name="Haugen E."/>
            <person name="Hourcade E."/>
            <person name="Levy R."/>
            <person name="Mangenot S."/>
            <person name="Muller E."/>
            <person name="Nadalig T."/>
            <person name="Pagni M."/>
            <person name="Penny C."/>
            <person name="Peyraud R."/>
            <person name="Robinson D.G."/>
            <person name="Roche D."/>
            <person name="Rouy Z."/>
            <person name="Saenampechek C."/>
            <person name="Salvignol G."/>
            <person name="Vallenet D."/>
            <person name="Wu Z."/>
            <person name="Marx C.J."/>
            <person name="Vorholt J.A."/>
            <person name="Olson M.V."/>
            <person name="Kaul R."/>
            <person name="Weissenbach J."/>
            <person name="Medigue C."/>
            <person name="Lidstrom M.E."/>
        </authorList>
    </citation>
    <scope>NUCLEOTIDE SEQUENCE [LARGE SCALE GENOMIC DNA]</scope>
    <source>
        <strain>ATCC 14718 / DSM 1338 / JCM 2805 / NCIMB 9133 / AM1</strain>
    </source>
</reference>